<reference key="1">
    <citation type="submission" date="2009-05" db="EMBL/GenBank/DDBJ databases">
        <title>Complete sequence of Tolumonas auensis DSM 9187.</title>
        <authorList>
            <consortium name="US DOE Joint Genome Institute"/>
            <person name="Lucas S."/>
            <person name="Copeland A."/>
            <person name="Lapidus A."/>
            <person name="Glavina del Rio T."/>
            <person name="Tice H."/>
            <person name="Bruce D."/>
            <person name="Goodwin L."/>
            <person name="Pitluck S."/>
            <person name="Chertkov O."/>
            <person name="Brettin T."/>
            <person name="Detter J.C."/>
            <person name="Han C."/>
            <person name="Larimer F."/>
            <person name="Land M."/>
            <person name="Hauser L."/>
            <person name="Kyrpides N."/>
            <person name="Mikhailova N."/>
            <person name="Spring S."/>
            <person name="Beller H."/>
        </authorList>
    </citation>
    <scope>NUCLEOTIDE SEQUENCE [LARGE SCALE GENOMIC DNA]</scope>
    <source>
        <strain>DSM 9187 / NBRC 110442 / TA 4</strain>
    </source>
</reference>
<feature type="chain" id="PRO_1000204301" description="GTP cyclohydrolase 1">
    <location>
        <begin position="1"/>
        <end position="216"/>
    </location>
</feature>
<feature type="binding site" evidence="1">
    <location>
        <position position="109"/>
    </location>
    <ligand>
        <name>Zn(2+)</name>
        <dbReference type="ChEBI" id="CHEBI:29105"/>
    </ligand>
</feature>
<feature type="binding site" evidence="1">
    <location>
        <position position="112"/>
    </location>
    <ligand>
        <name>Zn(2+)</name>
        <dbReference type="ChEBI" id="CHEBI:29105"/>
    </ligand>
</feature>
<feature type="binding site" evidence="1">
    <location>
        <position position="180"/>
    </location>
    <ligand>
        <name>Zn(2+)</name>
        <dbReference type="ChEBI" id="CHEBI:29105"/>
    </ligand>
</feature>
<keyword id="KW-0342">GTP-binding</keyword>
<keyword id="KW-0378">Hydrolase</keyword>
<keyword id="KW-0479">Metal-binding</keyword>
<keyword id="KW-0547">Nucleotide-binding</keyword>
<keyword id="KW-0554">One-carbon metabolism</keyword>
<keyword id="KW-1185">Reference proteome</keyword>
<keyword id="KW-0862">Zinc</keyword>
<sequence>MTHLSKEAVIVRSALEAKGLETPMQHSSLSAQEKKQQIEQHMTSIMTLLGLDLADDSLAETPHRIAKMYVDEIFSGLDYGSFPKITLIENKMGTDEMIKVQDIGLTSTCEHHFVTIDGKATVAYIPKDKIIGLSKINRIVNFFAKRPQVQERLTQQILVALQVLLGTDNVAITVTATHYCVKSRGVMDASSQTTTTALGGVFKSSAATRHEFLSRA</sequence>
<name>GCH1_TOLAT</name>
<protein>
    <recommendedName>
        <fullName evidence="1">GTP cyclohydrolase 1</fullName>
        <ecNumber evidence="1">3.5.4.16</ecNumber>
    </recommendedName>
    <alternativeName>
        <fullName evidence="1">GTP cyclohydrolase I</fullName>
        <shortName evidence="1">GTP-CH-I</shortName>
    </alternativeName>
</protein>
<accession>C4LDE6</accession>
<organism>
    <name type="scientific">Tolumonas auensis (strain DSM 9187 / NBRC 110442 / TA 4)</name>
    <dbReference type="NCBI Taxonomy" id="595494"/>
    <lineage>
        <taxon>Bacteria</taxon>
        <taxon>Pseudomonadati</taxon>
        <taxon>Pseudomonadota</taxon>
        <taxon>Gammaproteobacteria</taxon>
        <taxon>Aeromonadales</taxon>
        <taxon>Aeromonadaceae</taxon>
        <taxon>Tolumonas</taxon>
    </lineage>
</organism>
<proteinExistence type="inferred from homology"/>
<evidence type="ECO:0000255" key="1">
    <source>
        <dbReference type="HAMAP-Rule" id="MF_00223"/>
    </source>
</evidence>
<dbReference type="EC" id="3.5.4.16" evidence="1"/>
<dbReference type="EMBL" id="CP001616">
    <property type="protein sequence ID" value="ACQ92742.1"/>
    <property type="molecule type" value="Genomic_DNA"/>
</dbReference>
<dbReference type="RefSeq" id="WP_012729341.1">
    <property type="nucleotide sequence ID" value="NC_012691.1"/>
</dbReference>
<dbReference type="SMR" id="C4LDE6"/>
<dbReference type="STRING" id="595494.Tola_1116"/>
<dbReference type="KEGG" id="tau:Tola_1116"/>
<dbReference type="eggNOG" id="COG0302">
    <property type="taxonomic scope" value="Bacteria"/>
</dbReference>
<dbReference type="HOGENOM" id="CLU_049768_3_2_6"/>
<dbReference type="OrthoDB" id="9801207at2"/>
<dbReference type="UniPathway" id="UPA00848">
    <property type="reaction ID" value="UER00151"/>
</dbReference>
<dbReference type="Proteomes" id="UP000009073">
    <property type="component" value="Chromosome"/>
</dbReference>
<dbReference type="GO" id="GO:0005737">
    <property type="term" value="C:cytoplasm"/>
    <property type="evidence" value="ECO:0007669"/>
    <property type="project" value="TreeGrafter"/>
</dbReference>
<dbReference type="GO" id="GO:0005525">
    <property type="term" value="F:GTP binding"/>
    <property type="evidence" value="ECO:0007669"/>
    <property type="project" value="UniProtKB-KW"/>
</dbReference>
<dbReference type="GO" id="GO:0003934">
    <property type="term" value="F:GTP cyclohydrolase I activity"/>
    <property type="evidence" value="ECO:0007669"/>
    <property type="project" value="UniProtKB-UniRule"/>
</dbReference>
<dbReference type="GO" id="GO:0008270">
    <property type="term" value="F:zinc ion binding"/>
    <property type="evidence" value="ECO:0007669"/>
    <property type="project" value="UniProtKB-UniRule"/>
</dbReference>
<dbReference type="GO" id="GO:0006730">
    <property type="term" value="P:one-carbon metabolic process"/>
    <property type="evidence" value="ECO:0007669"/>
    <property type="project" value="UniProtKB-UniRule"/>
</dbReference>
<dbReference type="GO" id="GO:0006729">
    <property type="term" value="P:tetrahydrobiopterin biosynthetic process"/>
    <property type="evidence" value="ECO:0007669"/>
    <property type="project" value="TreeGrafter"/>
</dbReference>
<dbReference type="GO" id="GO:0046654">
    <property type="term" value="P:tetrahydrofolate biosynthetic process"/>
    <property type="evidence" value="ECO:0007669"/>
    <property type="project" value="UniProtKB-UniRule"/>
</dbReference>
<dbReference type="FunFam" id="3.30.1130.10:FF:000001">
    <property type="entry name" value="GTP cyclohydrolase 1"/>
    <property type="match status" value="1"/>
</dbReference>
<dbReference type="Gene3D" id="1.10.286.10">
    <property type="match status" value="1"/>
</dbReference>
<dbReference type="Gene3D" id="3.30.1130.10">
    <property type="match status" value="1"/>
</dbReference>
<dbReference type="HAMAP" id="MF_00223">
    <property type="entry name" value="FolE"/>
    <property type="match status" value="1"/>
</dbReference>
<dbReference type="InterPro" id="IPR043133">
    <property type="entry name" value="GTP-CH-I_C/QueF"/>
</dbReference>
<dbReference type="InterPro" id="IPR043134">
    <property type="entry name" value="GTP-CH-I_N"/>
</dbReference>
<dbReference type="InterPro" id="IPR001474">
    <property type="entry name" value="GTP_CycHdrlase_I"/>
</dbReference>
<dbReference type="InterPro" id="IPR018234">
    <property type="entry name" value="GTP_CycHdrlase_I_CS"/>
</dbReference>
<dbReference type="InterPro" id="IPR020602">
    <property type="entry name" value="GTP_CycHdrlase_I_dom"/>
</dbReference>
<dbReference type="NCBIfam" id="TIGR00063">
    <property type="entry name" value="folE"/>
    <property type="match status" value="1"/>
</dbReference>
<dbReference type="NCBIfam" id="NF006824">
    <property type="entry name" value="PRK09347.1-1"/>
    <property type="match status" value="1"/>
</dbReference>
<dbReference type="NCBIfam" id="NF006826">
    <property type="entry name" value="PRK09347.1-3"/>
    <property type="match status" value="1"/>
</dbReference>
<dbReference type="PANTHER" id="PTHR11109:SF7">
    <property type="entry name" value="GTP CYCLOHYDROLASE 1"/>
    <property type="match status" value="1"/>
</dbReference>
<dbReference type="PANTHER" id="PTHR11109">
    <property type="entry name" value="GTP CYCLOHYDROLASE I"/>
    <property type="match status" value="1"/>
</dbReference>
<dbReference type="Pfam" id="PF01227">
    <property type="entry name" value="GTP_cyclohydroI"/>
    <property type="match status" value="1"/>
</dbReference>
<dbReference type="SUPFAM" id="SSF55620">
    <property type="entry name" value="Tetrahydrobiopterin biosynthesis enzymes-like"/>
    <property type="match status" value="1"/>
</dbReference>
<dbReference type="PROSITE" id="PS00859">
    <property type="entry name" value="GTP_CYCLOHYDROL_1_1"/>
    <property type="match status" value="1"/>
</dbReference>
<dbReference type="PROSITE" id="PS00860">
    <property type="entry name" value="GTP_CYCLOHYDROL_1_2"/>
    <property type="match status" value="1"/>
</dbReference>
<gene>
    <name evidence="1" type="primary">folE</name>
    <name type="ordered locus">Tola_1116</name>
</gene>
<comment type="catalytic activity">
    <reaction evidence="1">
        <text>GTP + H2O = 7,8-dihydroneopterin 3'-triphosphate + formate + H(+)</text>
        <dbReference type="Rhea" id="RHEA:17473"/>
        <dbReference type="ChEBI" id="CHEBI:15377"/>
        <dbReference type="ChEBI" id="CHEBI:15378"/>
        <dbReference type="ChEBI" id="CHEBI:15740"/>
        <dbReference type="ChEBI" id="CHEBI:37565"/>
        <dbReference type="ChEBI" id="CHEBI:58462"/>
        <dbReference type="EC" id="3.5.4.16"/>
    </reaction>
</comment>
<comment type="pathway">
    <text evidence="1">Cofactor biosynthesis; 7,8-dihydroneopterin triphosphate biosynthesis; 7,8-dihydroneopterin triphosphate from GTP: step 1/1.</text>
</comment>
<comment type="subunit">
    <text evidence="1">Homomer.</text>
</comment>
<comment type="similarity">
    <text evidence="1">Belongs to the GTP cyclohydrolase I family.</text>
</comment>